<protein>
    <recommendedName>
        <fullName evidence="1">Enolase</fullName>
        <ecNumber evidence="1">4.2.1.11</ecNumber>
    </recommendedName>
    <alternativeName>
        <fullName evidence="1">2-phospho-D-glycerate hydro-lyase</fullName>
    </alternativeName>
    <alternativeName>
        <fullName evidence="1">2-phosphoglycerate dehydratase</fullName>
    </alternativeName>
</protein>
<comment type="function">
    <text evidence="1">Catalyzes the reversible conversion of 2-phosphoglycerate (2-PG) into phosphoenolpyruvate (PEP). It is essential for the degradation of carbohydrates via glycolysis.</text>
</comment>
<comment type="catalytic activity">
    <reaction evidence="1">
        <text>(2R)-2-phosphoglycerate = phosphoenolpyruvate + H2O</text>
        <dbReference type="Rhea" id="RHEA:10164"/>
        <dbReference type="ChEBI" id="CHEBI:15377"/>
        <dbReference type="ChEBI" id="CHEBI:58289"/>
        <dbReference type="ChEBI" id="CHEBI:58702"/>
        <dbReference type="EC" id="4.2.1.11"/>
    </reaction>
</comment>
<comment type="cofactor">
    <cofactor evidence="1">
        <name>Mg(2+)</name>
        <dbReference type="ChEBI" id="CHEBI:18420"/>
    </cofactor>
    <text evidence="1">Binds a second Mg(2+) ion via substrate during catalysis.</text>
</comment>
<comment type="pathway">
    <text evidence="1">Carbohydrate degradation; glycolysis; pyruvate from D-glyceraldehyde 3-phosphate: step 4/5.</text>
</comment>
<comment type="subcellular location">
    <subcellularLocation>
        <location evidence="1">Cytoplasm</location>
    </subcellularLocation>
    <subcellularLocation>
        <location evidence="1">Secreted</location>
    </subcellularLocation>
    <subcellularLocation>
        <location evidence="1">Cell surface</location>
    </subcellularLocation>
    <text evidence="1">Fractions of enolase are present in both the cytoplasm and on the cell surface.</text>
</comment>
<comment type="similarity">
    <text evidence="1">Belongs to the enolase family.</text>
</comment>
<feature type="chain" id="PRO_1000115928" description="Enolase">
    <location>
        <begin position="1"/>
        <end position="429"/>
    </location>
</feature>
<feature type="active site" description="Proton donor" evidence="1">
    <location>
        <position position="206"/>
    </location>
</feature>
<feature type="active site" description="Proton acceptor" evidence="1">
    <location>
        <position position="338"/>
    </location>
</feature>
<feature type="binding site" evidence="1">
    <location>
        <position position="164"/>
    </location>
    <ligand>
        <name>(2R)-2-phosphoglycerate</name>
        <dbReference type="ChEBI" id="CHEBI:58289"/>
    </ligand>
</feature>
<feature type="binding site" evidence="1">
    <location>
        <position position="243"/>
    </location>
    <ligand>
        <name>Mg(2+)</name>
        <dbReference type="ChEBI" id="CHEBI:18420"/>
    </ligand>
</feature>
<feature type="binding site" evidence="1">
    <location>
        <position position="286"/>
    </location>
    <ligand>
        <name>Mg(2+)</name>
        <dbReference type="ChEBI" id="CHEBI:18420"/>
    </ligand>
</feature>
<feature type="binding site" evidence="1">
    <location>
        <position position="313"/>
    </location>
    <ligand>
        <name>Mg(2+)</name>
        <dbReference type="ChEBI" id="CHEBI:18420"/>
    </ligand>
</feature>
<feature type="binding site" evidence="1">
    <location>
        <position position="338"/>
    </location>
    <ligand>
        <name>(2R)-2-phosphoglycerate</name>
        <dbReference type="ChEBI" id="CHEBI:58289"/>
    </ligand>
</feature>
<feature type="binding site" evidence="1">
    <location>
        <position position="367"/>
    </location>
    <ligand>
        <name>(2R)-2-phosphoglycerate</name>
        <dbReference type="ChEBI" id="CHEBI:58289"/>
    </ligand>
</feature>
<feature type="binding site" evidence="1">
    <location>
        <position position="368"/>
    </location>
    <ligand>
        <name>(2R)-2-phosphoglycerate</name>
        <dbReference type="ChEBI" id="CHEBI:58289"/>
    </ligand>
</feature>
<feature type="binding site" evidence="1">
    <location>
        <position position="389"/>
    </location>
    <ligand>
        <name>(2R)-2-phosphoglycerate</name>
        <dbReference type="ChEBI" id="CHEBI:58289"/>
    </ligand>
</feature>
<accession>B1LCF4</accession>
<name>ENO_THESQ</name>
<evidence type="ECO:0000255" key="1">
    <source>
        <dbReference type="HAMAP-Rule" id="MF_00318"/>
    </source>
</evidence>
<organism>
    <name type="scientific">Thermotoga sp. (strain RQ2)</name>
    <dbReference type="NCBI Taxonomy" id="126740"/>
    <lineage>
        <taxon>Bacteria</taxon>
        <taxon>Thermotogati</taxon>
        <taxon>Thermotogota</taxon>
        <taxon>Thermotogae</taxon>
        <taxon>Thermotogales</taxon>
        <taxon>Thermotogaceae</taxon>
        <taxon>Thermotoga</taxon>
    </lineage>
</organism>
<reference key="1">
    <citation type="journal article" date="2011" name="J. Bacteriol.">
        <title>Genome sequence of Thermotoga sp. strain RQ2, a hyperthermophilic bacterium isolated from a geothermally heated region of the seafloor near Ribeira Quente, the Azores.</title>
        <authorList>
            <person name="Swithers K.S."/>
            <person name="DiPippo J.L."/>
            <person name="Bruce D.C."/>
            <person name="Detter C."/>
            <person name="Tapia R."/>
            <person name="Han S."/>
            <person name="Saunders E."/>
            <person name="Goodwin L.A."/>
            <person name="Han J."/>
            <person name="Woyke T."/>
            <person name="Pitluck S."/>
            <person name="Pennacchio L."/>
            <person name="Nolan M."/>
            <person name="Mikhailova N."/>
            <person name="Lykidis A."/>
            <person name="Land M.L."/>
            <person name="Brettin T."/>
            <person name="Stetter K.O."/>
            <person name="Nelson K.E."/>
            <person name="Gogarten J.P."/>
            <person name="Noll K.M."/>
        </authorList>
    </citation>
    <scope>NUCLEOTIDE SEQUENCE [LARGE SCALE GENOMIC DNA]</scope>
    <source>
        <strain>RQ2</strain>
    </source>
</reference>
<dbReference type="EC" id="4.2.1.11" evidence="1"/>
<dbReference type="EMBL" id="CP000969">
    <property type="protein sequence ID" value="ACB08412.1"/>
    <property type="molecule type" value="Genomic_DNA"/>
</dbReference>
<dbReference type="RefSeq" id="WP_008193093.1">
    <property type="nucleotide sequence ID" value="NC_010483.1"/>
</dbReference>
<dbReference type="SMR" id="B1LCF4"/>
<dbReference type="KEGG" id="trq:TRQ2_0050"/>
<dbReference type="HOGENOM" id="CLU_031223_2_1_0"/>
<dbReference type="UniPathway" id="UPA00109">
    <property type="reaction ID" value="UER00187"/>
</dbReference>
<dbReference type="Proteomes" id="UP000001687">
    <property type="component" value="Chromosome"/>
</dbReference>
<dbReference type="GO" id="GO:0009986">
    <property type="term" value="C:cell surface"/>
    <property type="evidence" value="ECO:0007669"/>
    <property type="project" value="UniProtKB-SubCell"/>
</dbReference>
<dbReference type="GO" id="GO:0005576">
    <property type="term" value="C:extracellular region"/>
    <property type="evidence" value="ECO:0007669"/>
    <property type="project" value="UniProtKB-SubCell"/>
</dbReference>
<dbReference type="GO" id="GO:0000015">
    <property type="term" value="C:phosphopyruvate hydratase complex"/>
    <property type="evidence" value="ECO:0007669"/>
    <property type="project" value="InterPro"/>
</dbReference>
<dbReference type="GO" id="GO:0000287">
    <property type="term" value="F:magnesium ion binding"/>
    <property type="evidence" value="ECO:0007669"/>
    <property type="project" value="UniProtKB-UniRule"/>
</dbReference>
<dbReference type="GO" id="GO:0004634">
    <property type="term" value="F:phosphopyruvate hydratase activity"/>
    <property type="evidence" value="ECO:0007669"/>
    <property type="project" value="UniProtKB-UniRule"/>
</dbReference>
<dbReference type="GO" id="GO:0006096">
    <property type="term" value="P:glycolytic process"/>
    <property type="evidence" value="ECO:0007669"/>
    <property type="project" value="UniProtKB-UniRule"/>
</dbReference>
<dbReference type="CDD" id="cd03313">
    <property type="entry name" value="enolase"/>
    <property type="match status" value="1"/>
</dbReference>
<dbReference type="FunFam" id="3.20.20.120:FF:000001">
    <property type="entry name" value="Enolase"/>
    <property type="match status" value="1"/>
</dbReference>
<dbReference type="FunFam" id="3.30.390.10:FF:000001">
    <property type="entry name" value="Enolase"/>
    <property type="match status" value="1"/>
</dbReference>
<dbReference type="Gene3D" id="3.20.20.120">
    <property type="entry name" value="Enolase-like C-terminal domain"/>
    <property type="match status" value="1"/>
</dbReference>
<dbReference type="Gene3D" id="3.30.390.10">
    <property type="entry name" value="Enolase-like, N-terminal domain"/>
    <property type="match status" value="1"/>
</dbReference>
<dbReference type="HAMAP" id="MF_00318">
    <property type="entry name" value="Enolase"/>
    <property type="match status" value="1"/>
</dbReference>
<dbReference type="InterPro" id="IPR000941">
    <property type="entry name" value="Enolase"/>
</dbReference>
<dbReference type="InterPro" id="IPR036849">
    <property type="entry name" value="Enolase-like_C_sf"/>
</dbReference>
<dbReference type="InterPro" id="IPR029017">
    <property type="entry name" value="Enolase-like_N"/>
</dbReference>
<dbReference type="InterPro" id="IPR020810">
    <property type="entry name" value="Enolase_C"/>
</dbReference>
<dbReference type="InterPro" id="IPR020809">
    <property type="entry name" value="Enolase_CS"/>
</dbReference>
<dbReference type="InterPro" id="IPR020811">
    <property type="entry name" value="Enolase_N"/>
</dbReference>
<dbReference type="NCBIfam" id="TIGR01060">
    <property type="entry name" value="eno"/>
    <property type="match status" value="1"/>
</dbReference>
<dbReference type="PANTHER" id="PTHR11902">
    <property type="entry name" value="ENOLASE"/>
    <property type="match status" value="1"/>
</dbReference>
<dbReference type="PANTHER" id="PTHR11902:SF1">
    <property type="entry name" value="ENOLASE"/>
    <property type="match status" value="1"/>
</dbReference>
<dbReference type="Pfam" id="PF00113">
    <property type="entry name" value="Enolase_C"/>
    <property type="match status" value="1"/>
</dbReference>
<dbReference type="Pfam" id="PF03952">
    <property type="entry name" value="Enolase_N"/>
    <property type="match status" value="1"/>
</dbReference>
<dbReference type="PIRSF" id="PIRSF001400">
    <property type="entry name" value="Enolase"/>
    <property type="match status" value="1"/>
</dbReference>
<dbReference type="PRINTS" id="PR00148">
    <property type="entry name" value="ENOLASE"/>
</dbReference>
<dbReference type="SFLD" id="SFLDS00001">
    <property type="entry name" value="Enolase"/>
    <property type="match status" value="1"/>
</dbReference>
<dbReference type="SFLD" id="SFLDF00002">
    <property type="entry name" value="enolase"/>
    <property type="match status" value="1"/>
</dbReference>
<dbReference type="SMART" id="SM01192">
    <property type="entry name" value="Enolase_C"/>
    <property type="match status" value="1"/>
</dbReference>
<dbReference type="SMART" id="SM01193">
    <property type="entry name" value="Enolase_N"/>
    <property type="match status" value="1"/>
</dbReference>
<dbReference type="SUPFAM" id="SSF51604">
    <property type="entry name" value="Enolase C-terminal domain-like"/>
    <property type="match status" value="1"/>
</dbReference>
<dbReference type="SUPFAM" id="SSF54826">
    <property type="entry name" value="Enolase N-terminal domain-like"/>
    <property type="match status" value="1"/>
</dbReference>
<dbReference type="PROSITE" id="PS00164">
    <property type="entry name" value="ENOLASE"/>
    <property type="match status" value="1"/>
</dbReference>
<gene>
    <name evidence="1" type="primary">eno</name>
    <name type="ordered locus">TRQ2_0050</name>
</gene>
<proteinExistence type="inferred from homology"/>
<sequence>MYVEIVDVRAREVLDSRGNPTVEAEVVLEDGTMGRAIVPSGASTGKFEALEIRDKDKKRYLGKGVLKAVENVNETIAPALIGMNAFDQPLVDKTLIELDGTENKSKLGANAILAVSMAVARAAANYLGLPLYKYLGGVNAKVLPVPLMNVINGGQHADNNLDLQEFMIVPAGFDSFREALRAGAEIFHTLKKILHEAGHVTAVGDEGGFAPNLSSNEEAIKVLIEAIEKAGYKPGEEVFIALDCAASSFYDEEKGVYYVDGEEKSSEVLMGYYEELVAKYPIISIEDPFAEEDWDAFVEFTKRVGNKVQIVGDDLYVTNVKRLSKGIELKATNSILIKLNQIGTVTETLDAVEMAQKNNMTAIISHRSGESEDTFIADLAVATNAGFIKTGSLSRSERTAKYNQLLRIEEELGKVAEFRGLKSFYSIKR</sequence>
<keyword id="KW-0963">Cytoplasm</keyword>
<keyword id="KW-0324">Glycolysis</keyword>
<keyword id="KW-0456">Lyase</keyword>
<keyword id="KW-0460">Magnesium</keyword>
<keyword id="KW-0479">Metal-binding</keyword>
<keyword id="KW-0964">Secreted</keyword>